<keyword id="KW-1005">Bacterial flagellum biogenesis</keyword>
<keyword id="KW-1006">Bacterial flagellum protein export</keyword>
<keyword id="KW-1003">Cell membrane</keyword>
<keyword id="KW-0342">GTP-binding</keyword>
<keyword id="KW-0472">Membrane</keyword>
<keyword id="KW-0547">Nucleotide-binding</keyword>
<keyword id="KW-0653">Protein transport</keyword>
<keyword id="KW-0813">Transport</keyword>
<proteinExistence type="inferred from homology"/>
<gene>
    <name type="primary">flhF</name>
    <name type="ordered locus">jhp_0389</name>
</gene>
<feature type="chain" id="PRO_0000101224" description="Flagellar biosynthesis protein FlhF">
    <location>
        <begin position="1"/>
        <end position="455"/>
    </location>
</feature>
<feature type="binding site" evidence="1">
    <location>
        <begin position="259"/>
        <end position="266"/>
    </location>
    <ligand>
        <name>GTP</name>
        <dbReference type="ChEBI" id="CHEBI:37565"/>
    </ligand>
</feature>
<feature type="binding site" evidence="1">
    <location>
        <begin position="338"/>
        <end position="342"/>
    </location>
    <ligand>
        <name>GTP</name>
        <dbReference type="ChEBI" id="CHEBI:37565"/>
    </ligand>
</feature>
<feature type="binding site" evidence="1">
    <location>
        <begin position="396"/>
        <end position="399"/>
    </location>
    <ligand>
        <name>GTP</name>
        <dbReference type="ChEBI" id="CHEBI:37565"/>
    </ligand>
</feature>
<dbReference type="EMBL" id="AE001439">
    <property type="protein sequence ID" value="AAD05976.1"/>
    <property type="molecule type" value="Genomic_DNA"/>
</dbReference>
<dbReference type="PIR" id="C71938">
    <property type="entry name" value="C71938"/>
</dbReference>
<dbReference type="RefSeq" id="WP_010882516.1">
    <property type="nucleotide sequence ID" value="NC_000921.1"/>
</dbReference>
<dbReference type="SMR" id="Q9ZM34"/>
<dbReference type="KEGG" id="hpj:jhp_0389"/>
<dbReference type="PATRIC" id="fig|85963.30.peg.621"/>
<dbReference type="eggNOG" id="COG1419">
    <property type="taxonomic scope" value="Bacteria"/>
</dbReference>
<dbReference type="Proteomes" id="UP000000804">
    <property type="component" value="Chromosome"/>
</dbReference>
<dbReference type="GO" id="GO:0005886">
    <property type="term" value="C:plasma membrane"/>
    <property type="evidence" value="ECO:0007669"/>
    <property type="project" value="UniProtKB-SubCell"/>
</dbReference>
<dbReference type="GO" id="GO:0016887">
    <property type="term" value="F:ATP hydrolysis activity"/>
    <property type="evidence" value="ECO:0007669"/>
    <property type="project" value="InterPro"/>
</dbReference>
<dbReference type="GO" id="GO:0005525">
    <property type="term" value="F:GTP binding"/>
    <property type="evidence" value="ECO:0007669"/>
    <property type="project" value="UniProtKB-KW"/>
</dbReference>
<dbReference type="GO" id="GO:0003924">
    <property type="term" value="F:GTPase activity"/>
    <property type="evidence" value="ECO:0007669"/>
    <property type="project" value="InterPro"/>
</dbReference>
<dbReference type="GO" id="GO:0005047">
    <property type="term" value="F:signal recognition particle binding"/>
    <property type="evidence" value="ECO:0007669"/>
    <property type="project" value="TreeGrafter"/>
</dbReference>
<dbReference type="GO" id="GO:0044781">
    <property type="term" value="P:bacterial-type flagellum organization"/>
    <property type="evidence" value="ECO:0007669"/>
    <property type="project" value="UniProtKB-KW"/>
</dbReference>
<dbReference type="GO" id="GO:0015031">
    <property type="term" value="P:protein transport"/>
    <property type="evidence" value="ECO:0007669"/>
    <property type="project" value="UniProtKB-KW"/>
</dbReference>
<dbReference type="GO" id="GO:0006614">
    <property type="term" value="P:SRP-dependent cotranslational protein targeting to membrane"/>
    <property type="evidence" value="ECO:0007669"/>
    <property type="project" value="InterPro"/>
</dbReference>
<dbReference type="CDD" id="cd17873">
    <property type="entry name" value="FlhF"/>
    <property type="match status" value="1"/>
</dbReference>
<dbReference type="FunFam" id="3.40.50.300:FF:000695">
    <property type="entry name" value="Flagellar biosynthesis regulator FlhF"/>
    <property type="match status" value="1"/>
</dbReference>
<dbReference type="Gene3D" id="1.20.120.1380">
    <property type="entry name" value="Flagellar FlhF biosynthesis protein, N domain"/>
    <property type="match status" value="1"/>
</dbReference>
<dbReference type="Gene3D" id="3.40.50.300">
    <property type="entry name" value="P-loop containing nucleotide triphosphate hydrolases"/>
    <property type="match status" value="1"/>
</dbReference>
<dbReference type="InterPro" id="IPR003593">
    <property type="entry name" value="AAA+_ATPase"/>
</dbReference>
<dbReference type="InterPro" id="IPR020006">
    <property type="entry name" value="FlhF"/>
</dbReference>
<dbReference type="InterPro" id="IPR047040">
    <property type="entry name" value="FlhF__GTPase_dom"/>
</dbReference>
<dbReference type="InterPro" id="IPR027417">
    <property type="entry name" value="P-loop_NTPase"/>
</dbReference>
<dbReference type="InterPro" id="IPR000897">
    <property type="entry name" value="SRP54_GTPase_dom"/>
</dbReference>
<dbReference type="NCBIfam" id="TIGR03499">
    <property type="entry name" value="FlhF"/>
    <property type="match status" value="1"/>
</dbReference>
<dbReference type="PANTHER" id="PTHR43134:SF3">
    <property type="entry name" value="FLAGELLAR BIOSYNTHESIS PROTEIN FLHF"/>
    <property type="match status" value="1"/>
</dbReference>
<dbReference type="PANTHER" id="PTHR43134">
    <property type="entry name" value="SIGNAL RECOGNITION PARTICLE RECEPTOR SUBUNIT ALPHA"/>
    <property type="match status" value="1"/>
</dbReference>
<dbReference type="Pfam" id="PF00448">
    <property type="entry name" value="SRP54"/>
    <property type="match status" value="1"/>
</dbReference>
<dbReference type="SMART" id="SM00382">
    <property type="entry name" value="AAA"/>
    <property type="match status" value="1"/>
</dbReference>
<dbReference type="SMART" id="SM00962">
    <property type="entry name" value="SRP54"/>
    <property type="match status" value="1"/>
</dbReference>
<dbReference type="SUPFAM" id="SSF52540">
    <property type="entry name" value="P-loop containing nucleoside triphosphate hydrolases"/>
    <property type="match status" value="1"/>
</dbReference>
<evidence type="ECO:0000250" key="1"/>
<evidence type="ECO:0000305" key="2"/>
<organism>
    <name type="scientific">Helicobacter pylori (strain J99 / ATCC 700824)</name>
    <name type="common">Campylobacter pylori J99</name>
    <dbReference type="NCBI Taxonomy" id="85963"/>
    <lineage>
        <taxon>Bacteria</taxon>
        <taxon>Pseudomonadati</taxon>
        <taxon>Campylobacterota</taxon>
        <taxon>Epsilonproteobacteria</taxon>
        <taxon>Campylobacterales</taxon>
        <taxon>Helicobacteraceae</taxon>
        <taxon>Helicobacter</taxon>
    </lineage>
</organism>
<sequence length="455" mass="51949">MKFYTYSGETAAEALKIAQSHHGVDTLVFKTQEIRKKTLTSSGLYEIVVAVEEEENKKAPLIPESLYDEELNEEDVVMQLSSTVEEMRKLAGVSSNQRNYTFSKNKTLLEKDAPLEDTPLEANKQDALLQALKDEANHKKEREKREVKQEEEIKDINAQLSKIRDSLKLIQNMFWDEKNPNSVNIPQEFAEIYKLAKQSGMKSSHLDEIMQLSLELMPLRMRENSVTIKRYFREVLRKIILCRPEDLNLRQKRILMLVGPTGVGKTTTLAKLAARYSRMLAKKYKVGIITLDNYRIGALEQLSWYANKMKMSIEAVIDAKDFAKEIEALEYCDFILVDTTGHSQYDKEKIAGLKEFIDGGYNIDVSLVLSVTTKYEDMKDIYDSFGVLGIDTLIFTKLDESRGLGNLFSLVHESQKPISYLSVGQEVPMDLKVATNEYLVDCMLDGFSNPNKEQA</sequence>
<accession>Q9ZM34</accession>
<reference key="1">
    <citation type="journal article" date="1999" name="Nature">
        <title>Genomic sequence comparison of two unrelated isolates of the human gastric pathogen Helicobacter pylori.</title>
        <authorList>
            <person name="Alm R.A."/>
            <person name="Ling L.-S.L."/>
            <person name="Moir D.T."/>
            <person name="King B.L."/>
            <person name="Brown E.D."/>
            <person name="Doig P.C."/>
            <person name="Smith D.R."/>
            <person name="Noonan B."/>
            <person name="Guild B.C."/>
            <person name="deJonge B.L."/>
            <person name="Carmel G."/>
            <person name="Tummino P.J."/>
            <person name="Caruso A."/>
            <person name="Uria-Nickelsen M."/>
            <person name="Mills D.M."/>
            <person name="Ives C."/>
            <person name="Gibson R."/>
            <person name="Merberg D."/>
            <person name="Mills S.D."/>
            <person name="Jiang Q."/>
            <person name="Taylor D.E."/>
            <person name="Vovis G.F."/>
            <person name="Trust T.J."/>
        </authorList>
    </citation>
    <scope>NUCLEOTIDE SEQUENCE [LARGE SCALE GENOMIC DNA]</scope>
    <source>
        <strain>J99 / ATCC 700824</strain>
    </source>
</reference>
<name>FLHF_HELPJ</name>
<comment type="function">
    <text evidence="1">Necessary for flagellar biosynthesis. May be involved in translocation of the flagellum (By similarity).</text>
</comment>
<comment type="subcellular location">
    <subcellularLocation>
        <location evidence="1">Cell membrane</location>
        <topology evidence="1">Peripheral membrane protein</topology>
        <orientation evidence="1">Cytoplasmic side</orientation>
    </subcellularLocation>
</comment>
<comment type="similarity">
    <text evidence="2">Belongs to the GTP-binding SRP family.</text>
</comment>
<protein>
    <recommendedName>
        <fullName>Flagellar biosynthesis protein FlhF</fullName>
    </recommendedName>
    <alternativeName>
        <fullName>Flagella-associated GTP-binding protein</fullName>
    </alternativeName>
</protein>